<keyword id="KW-0002">3D-structure</keyword>
<keyword id="KW-0007">Acetylation</keyword>
<keyword id="KW-0186">Copper</keyword>
<keyword id="KW-0903">Direct protein sequencing</keyword>
<keyword id="KW-0479">Metal-binding</keyword>
<keyword id="KW-0480">Metal-thiolate cluster</keyword>
<keyword id="KW-0597">Phosphoprotein</keyword>
<keyword id="KW-1267">Proteomics identification</keyword>
<keyword id="KW-1185">Reference proteome</keyword>
<keyword id="KW-0862">Zinc</keyword>
<comment type="function">
    <text>Binds heavy metals. Contains three zinc and three copper atoms per polypeptide chain and only a negligible amount of cadmium. Inhibits survival and neurite formation of cortical neurons in vitro.</text>
</comment>
<comment type="interaction">
    <interactant intactId="EBI-8084264">
        <id>P25713</id>
    </interactant>
    <interactant intactId="EBI-750109">
        <id>Q9NYB0</id>
        <label>TERF2IP</label>
    </interactant>
    <organismsDiffer>false</organismsDiffer>
    <experiments>2</experiments>
</comment>
<comment type="interaction">
    <interactant intactId="EBI-8084264">
        <id>P25713</id>
    </interactant>
    <interactant intactId="EBI-711909">
        <id>P02766</id>
        <label>TTR</label>
    </interactant>
    <organismsDiffer>false</organismsDiffer>
    <experiments>3</experiments>
</comment>
<comment type="tissue specificity">
    <text>Abundant in a subset of astrocytes in the normal human brain, but greatly reduced in the Alzheimer disease (AD) brain.</text>
</comment>
<comment type="similarity">
    <text evidence="5">Belongs to the metallothionein superfamily. Type 1 family.</text>
</comment>
<protein>
    <recommendedName>
        <fullName>Metallothionein-3</fullName>
        <shortName>MT-3</shortName>
    </recommendedName>
    <alternativeName>
        <fullName>GIFB</fullName>
        <shortName>GIF</shortName>
    </alternativeName>
    <alternativeName>
        <fullName>Growth inhibitory factor</fullName>
    </alternativeName>
    <alternativeName>
        <fullName>Metallothionein-III</fullName>
        <shortName>MT-III</shortName>
    </alternativeName>
</protein>
<gene>
    <name type="primary">MT3</name>
</gene>
<reference key="1">
    <citation type="journal article" date="1991" name="Neuron">
        <title>The growth inhibitory factor that is deficient in the Alzheimer's disease brain is a 68 amino acid metallothionein-like protein.</title>
        <authorList>
            <person name="Uchida Y."/>
            <person name="Takio K."/>
            <person name="Titani K."/>
            <person name="Ihara Y."/>
            <person name="Tomonaga M."/>
        </authorList>
    </citation>
    <scope>PROTEIN SEQUENCE</scope>
    <scope>ACETYLATION AT MET-1</scope>
    <source>
        <tissue>Brain</tissue>
    </source>
</reference>
<reference key="2">
    <citation type="journal article" date="1992" name="Proc. Natl. Acad. Sci. U.S.A.">
        <title>MT-III, a brain-specific member of the metallothionein gene family.</title>
        <authorList>
            <person name="Palmiter R.D."/>
            <person name="Findley S.D."/>
            <person name="Whitmore T.E."/>
            <person name="Durnam D.M."/>
        </authorList>
    </citation>
    <scope>NUCLEOTIDE SEQUENCE [GENOMIC DNA]</scope>
    <source>
        <tissue>Brain</tissue>
    </source>
</reference>
<reference key="3">
    <citation type="journal article" date="1992" name="EMBO J.">
        <title>Molecular cloning of human growth inhibitory factor cDNA and its down-regulation in Alzheimer's disease.</title>
        <authorList>
            <person name="Tsuji S."/>
            <person name="Kobayashi H."/>
            <person name="Uchida Y."/>
            <person name="Ihara Y."/>
            <person name="Miyatake T."/>
        </authorList>
    </citation>
    <scope>NUCLEOTIDE SEQUENCE [MRNA]</scope>
</reference>
<reference key="4">
    <citation type="journal article" date="1994" name="Gene">
        <title>Structures of the human and mouse growth inhibitory factor-encoding genes.</title>
        <authorList>
            <person name="Naruse S."/>
            <person name="Igarashi S."/>
            <person name="Furuya T."/>
            <person name="Kobayashi H."/>
            <person name="Miyatake T."/>
            <person name="Tsuji S."/>
        </authorList>
    </citation>
    <scope>NUCLEOTIDE SEQUENCE [GENOMIC DNA]</scope>
</reference>
<reference key="5">
    <citation type="journal article" date="1995" name="Biochem. Biophys. Res. Commun.">
        <title>Modulation of metallothionein-III mRNA content and growth rate of rat C6-glial cells by transfection with human 5-HT1D receptor genes.</title>
        <authorList>
            <person name="Amoureux M.C."/>
            <person name="Wurch T."/>
            <person name="Pauwels P.J."/>
        </authorList>
    </citation>
    <scope>NUCLEOTIDE SEQUENCE [MRNA]</scope>
</reference>
<reference key="6">
    <citation type="submission" date="2003-05" db="EMBL/GenBank/DDBJ databases">
        <title>Cloning of human full-length CDSs in BD Creator(TM) system donor vector.</title>
        <authorList>
            <person name="Kalnine N."/>
            <person name="Chen X."/>
            <person name="Rolfs A."/>
            <person name="Halleck A."/>
            <person name="Hines L."/>
            <person name="Eisenstein S."/>
            <person name="Koundinya M."/>
            <person name="Raphael J."/>
            <person name="Moreira D."/>
            <person name="Kelley T."/>
            <person name="LaBaer J."/>
            <person name="Lin Y."/>
            <person name="Phelan M."/>
            <person name="Farmer A."/>
        </authorList>
    </citation>
    <scope>NUCLEOTIDE SEQUENCE [LARGE SCALE MRNA]</scope>
</reference>
<reference key="7">
    <citation type="submission" date="2005-11" db="EMBL/GenBank/DDBJ databases">
        <authorList>
            <consortium name="NIEHS SNPs program"/>
        </authorList>
    </citation>
    <scope>NUCLEOTIDE SEQUENCE [GENOMIC DNA]</scope>
</reference>
<reference key="8">
    <citation type="journal article" date="2004" name="Genome Res.">
        <title>The status, quality, and expansion of the NIH full-length cDNA project: the Mammalian Gene Collection (MGC).</title>
        <authorList>
            <consortium name="The MGC Project Team"/>
        </authorList>
    </citation>
    <scope>NUCLEOTIDE SEQUENCE [LARGE SCALE MRNA]</scope>
    <source>
        <tissue>Brain</tissue>
    </source>
</reference>
<reference evidence="7 8" key="9">
    <citation type="submission" date="2005-12" db="PDB data bank">
        <title>Solution structure of a-domain of HUMAN Metallothionein-3 (MT-3).</title>
        <authorList>
            <person name="Wu H."/>
            <person name="Zhang Q."/>
        </authorList>
    </citation>
    <scope>STRUCTURE BY NMR OF 32-68</scope>
</reference>
<reference evidence="6" key="10">
    <citation type="journal article" date="2006" name="FEBS Lett.">
        <title>Solution structure and dynamics of human metallothionein-3 (MT-3).</title>
        <authorList>
            <person name="Wang H."/>
            <person name="Zhang Q."/>
            <person name="Cai B."/>
            <person name="Li H."/>
            <person name="Sze K.H."/>
            <person name="Huang Z.X."/>
            <person name="Wu H.M."/>
            <person name="Sun H."/>
        </authorList>
    </citation>
    <scope>STRUCTURE BY NMR OF 32-68 IN COMPLEX WITH CADMIUM IONS</scope>
</reference>
<sequence length="68" mass="6927">MDPETCPCPSGGSCTCADSCKCEGCKCTSCKKSCCSCCPAECEKCAKDCVCKGGEAAEAEAEKCSCCQ</sequence>
<proteinExistence type="evidence at protein level"/>
<evidence type="ECO:0000250" key="1">
    <source>
        <dbReference type="UniProtKB" id="P02795"/>
    </source>
</evidence>
<evidence type="ECO:0000250" key="2">
    <source>
        <dbReference type="UniProtKB" id="P28184"/>
    </source>
</evidence>
<evidence type="ECO:0000269" key="3">
    <source>
    </source>
</evidence>
<evidence type="ECO:0000269" key="4">
    <source>
    </source>
</evidence>
<evidence type="ECO:0000305" key="5"/>
<evidence type="ECO:0007744" key="6">
    <source>
        <dbReference type="PDB" id="2F5H"/>
    </source>
</evidence>
<evidence type="ECO:0007744" key="7">
    <source>
        <dbReference type="PDB" id="2FJ4"/>
    </source>
</evidence>
<evidence type="ECO:0007744" key="8">
    <source>
        <dbReference type="PDB" id="2FJ5"/>
    </source>
</evidence>
<evidence type="ECO:0007829" key="9">
    <source>
        <dbReference type="PDB" id="2F5H"/>
    </source>
</evidence>
<evidence type="ECO:0007829" key="10">
    <source>
        <dbReference type="PDB" id="2FJ4"/>
    </source>
</evidence>
<name>MT3_HUMAN</name>
<feature type="chain" id="PRO_0000197250" description="Metallothionein-3">
    <location>
        <begin position="1"/>
        <end position="68"/>
    </location>
</feature>
<feature type="region of interest" description="Beta">
    <location>
        <begin position="1"/>
        <end position="30"/>
    </location>
</feature>
<feature type="region of interest" description="Alpha">
    <location>
        <begin position="31"/>
        <end position="68"/>
    </location>
</feature>
<feature type="binding site" evidence="1">
    <location>
        <position position="6"/>
    </location>
    <ligand>
        <name>a divalent metal cation</name>
        <dbReference type="ChEBI" id="CHEBI:60240"/>
        <label>1</label>
        <note>in cluster B</note>
    </ligand>
</feature>
<feature type="binding site" evidence="1">
    <location>
        <position position="8"/>
    </location>
    <ligand>
        <name>a divalent metal cation</name>
        <dbReference type="ChEBI" id="CHEBI:60240"/>
        <label>1</label>
        <note>in cluster B</note>
    </ligand>
</feature>
<feature type="binding site" evidence="1">
    <location>
        <position position="8"/>
    </location>
    <ligand>
        <name>a divalent metal cation</name>
        <dbReference type="ChEBI" id="CHEBI:60240"/>
        <label>2</label>
        <note>in cluster B</note>
    </ligand>
</feature>
<feature type="binding site" evidence="1">
    <location>
        <position position="14"/>
    </location>
    <ligand>
        <name>a divalent metal cation</name>
        <dbReference type="ChEBI" id="CHEBI:60240"/>
        <label>2</label>
        <note>in cluster B</note>
    </ligand>
</feature>
<feature type="binding site" evidence="1">
    <location>
        <position position="16"/>
    </location>
    <ligand>
        <name>a divalent metal cation</name>
        <dbReference type="ChEBI" id="CHEBI:60240"/>
        <label>2</label>
        <note>in cluster B</note>
    </ligand>
</feature>
<feature type="binding site" evidence="1">
    <location>
        <position position="16"/>
    </location>
    <ligand>
        <name>a divalent metal cation</name>
        <dbReference type="ChEBI" id="CHEBI:60240"/>
        <label>3</label>
        <note>in cluster B</note>
    </ligand>
</feature>
<feature type="binding site" evidence="1">
    <location>
        <position position="20"/>
    </location>
    <ligand>
        <name>a divalent metal cation</name>
        <dbReference type="ChEBI" id="CHEBI:60240"/>
        <label>3</label>
        <note>in cluster B</note>
    </ligand>
</feature>
<feature type="binding site" evidence="1">
    <location>
        <position position="22"/>
    </location>
    <ligand>
        <name>a divalent metal cation</name>
        <dbReference type="ChEBI" id="CHEBI:60240"/>
        <label>1</label>
        <note>in cluster B</note>
    </ligand>
</feature>
<feature type="binding site" evidence="1">
    <location>
        <position position="25"/>
    </location>
    <ligand>
        <name>a divalent metal cation</name>
        <dbReference type="ChEBI" id="CHEBI:60240"/>
        <label>1</label>
        <note>in cluster B</note>
    </ligand>
</feature>
<feature type="binding site" evidence="1">
    <location>
        <position position="25"/>
    </location>
    <ligand>
        <name>a divalent metal cation</name>
        <dbReference type="ChEBI" id="CHEBI:60240"/>
        <label>3</label>
        <note>in cluster B</note>
    </ligand>
</feature>
<feature type="binding site" evidence="1">
    <location>
        <position position="27"/>
    </location>
    <ligand>
        <name>a divalent metal cation</name>
        <dbReference type="ChEBI" id="CHEBI:60240"/>
        <label>2</label>
        <note>in cluster B</note>
    </ligand>
</feature>
<feature type="binding site" evidence="1">
    <location>
        <position position="30"/>
    </location>
    <ligand>
        <name>a divalent metal cation</name>
        <dbReference type="ChEBI" id="CHEBI:60240"/>
        <label>3</label>
        <note>in cluster B</note>
    </ligand>
</feature>
<feature type="binding site" evidence="3 6">
    <location>
        <position position="34"/>
    </location>
    <ligand>
        <name>a divalent metal cation</name>
        <dbReference type="ChEBI" id="CHEBI:60240"/>
        <label>4</label>
        <note>in cluster A</note>
    </ligand>
</feature>
<feature type="binding site" evidence="3 6">
    <location>
        <position position="35"/>
    </location>
    <ligand>
        <name>a divalent metal cation</name>
        <dbReference type="ChEBI" id="CHEBI:60240"/>
        <label>4</label>
        <note>in cluster A</note>
    </ligand>
</feature>
<feature type="binding site" evidence="3 6">
    <location>
        <position position="35"/>
    </location>
    <ligand>
        <name>a divalent metal cation</name>
        <dbReference type="ChEBI" id="CHEBI:60240"/>
        <label>5</label>
        <note>in cluster A</note>
    </ligand>
</feature>
<feature type="binding site" evidence="3 6">
    <location>
        <position position="37"/>
    </location>
    <ligand>
        <name>a divalent metal cation</name>
        <dbReference type="ChEBI" id="CHEBI:60240"/>
        <label>5</label>
        <note>in cluster A</note>
    </ligand>
</feature>
<feature type="binding site" evidence="3 6">
    <location>
        <position position="38"/>
    </location>
    <ligand>
        <name>a divalent metal cation</name>
        <dbReference type="ChEBI" id="CHEBI:60240"/>
        <label>5</label>
        <note>in cluster A</note>
    </ligand>
</feature>
<feature type="binding site" evidence="3 6">
    <location>
        <position position="38"/>
    </location>
    <ligand>
        <name>a divalent metal cation</name>
        <dbReference type="ChEBI" id="CHEBI:60240"/>
        <label>6</label>
        <note>in cluster A</note>
    </ligand>
</feature>
<feature type="binding site" evidence="3 6">
    <location>
        <position position="42"/>
    </location>
    <ligand>
        <name>a divalent metal cation</name>
        <dbReference type="ChEBI" id="CHEBI:60240"/>
        <label>6</label>
        <note>in cluster A</note>
    </ligand>
</feature>
<feature type="binding site" evidence="3 6">
    <location>
        <position position="45"/>
    </location>
    <ligand>
        <name>a divalent metal cation</name>
        <dbReference type="ChEBI" id="CHEBI:60240"/>
        <label>4</label>
        <note>in cluster A</note>
    </ligand>
</feature>
<feature type="binding site" evidence="3 6">
    <location>
        <position position="45"/>
    </location>
    <ligand>
        <name>a divalent metal cation</name>
        <dbReference type="ChEBI" id="CHEBI:60240"/>
        <label>6</label>
        <note>in cluster A</note>
    </ligand>
</feature>
<feature type="binding site" evidence="3 6">
    <location>
        <position position="49"/>
    </location>
    <ligand>
        <name>a divalent metal cation</name>
        <dbReference type="ChEBI" id="CHEBI:60240"/>
        <label>4</label>
        <note>in cluster A</note>
    </ligand>
</feature>
<feature type="binding site" evidence="3 6">
    <location>
        <position position="51"/>
    </location>
    <ligand>
        <name>a divalent metal cation</name>
        <dbReference type="ChEBI" id="CHEBI:60240"/>
        <label>5</label>
        <note>in cluster A</note>
    </ligand>
</feature>
<feature type="binding site" evidence="3 6">
    <location>
        <position position="51"/>
    </location>
    <ligand>
        <name>a divalent metal cation</name>
        <dbReference type="ChEBI" id="CHEBI:60240"/>
        <label>7</label>
        <note>in cluster A</note>
    </ligand>
</feature>
<feature type="binding site" evidence="3 6">
    <location>
        <position position="64"/>
    </location>
    <ligand>
        <name>a divalent metal cation</name>
        <dbReference type="ChEBI" id="CHEBI:60240"/>
        <label>7</label>
        <note>in cluster A</note>
    </ligand>
</feature>
<feature type="binding site" evidence="3 6">
    <location>
        <position position="66"/>
    </location>
    <ligand>
        <name>a divalent metal cation</name>
        <dbReference type="ChEBI" id="CHEBI:60240"/>
        <label>7</label>
        <note>in cluster A</note>
    </ligand>
</feature>
<feature type="binding site" evidence="3 6">
    <location>
        <position position="67"/>
    </location>
    <ligand>
        <name>a divalent metal cation</name>
        <dbReference type="ChEBI" id="CHEBI:60240"/>
        <label>6</label>
        <note>in cluster A</note>
    </ligand>
</feature>
<feature type="binding site" evidence="3 6">
    <location>
        <position position="67"/>
    </location>
    <ligand>
        <name>a divalent metal cation</name>
        <dbReference type="ChEBI" id="CHEBI:60240"/>
        <label>7</label>
        <note>in cluster A</note>
    </ligand>
</feature>
<feature type="modified residue" description="N-acetylmethionine" evidence="4">
    <location>
        <position position="1"/>
    </location>
</feature>
<feature type="modified residue" description="Phosphoserine" evidence="2">
    <location>
        <position position="33"/>
    </location>
</feature>
<feature type="strand" evidence="9">
    <location>
        <begin position="36"/>
        <end position="38"/>
    </location>
</feature>
<feature type="helix" evidence="9">
    <location>
        <begin position="44"/>
        <end position="47"/>
    </location>
</feature>
<feature type="helix" evidence="10">
    <location>
        <begin position="50"/>
        <end position="53"/>
    </location>
</feature>
<feature type="turn" evidence="10">
    <location>
        <begin position="55"/>
        <end position="59"/>
    </location>
</feature>
<feature type="strand" evidence="10">
    <location>
        <begin position="60"/>
        <end position="62"/>
    </location>
</feature>
<feature type="turn" evidence="10">
    <location>
        <begin position="65"/>
        <end position="67"/>
    </location>
</feature>
<organism>
    <name type="scientific">Homo sapiens</name>
    <name type="common">Human</name>
    <dbReference type="NCBI Taxonomy" id="9606"/>
    <lineage>
        <taxon>Eukaryota</taxon>
        <taxon>Metazoa</taxon>
        <taxon>Chordata</taxon>
        <taxon>Craniata</taxon>
        <taxon>Vertebrata</taxon>
        <taxon>Euteleostomi</taxon>
        <taxon>Mammalia</taxon>
        <taxon>Eutheria</taxon>
        <taxon>Euarchontoglires</taxon>
        <taxon>Primates</taxon>
        <taxon>Haplorrhini</taxon>
        <taxon>Catarrhini</taxon>
        <taxon>Hominidae</taxon>
        <taxon>Homo</taxon>
    </lineage>
</organism>
<dbReference type="EMBL" id="M93311">
    <property type="protein sequence ID" value="AAA36214.1"/>
    <property type="molecule type" value="Genomic_DNA"/>
</dbReference>
<dbReference type="EMBL" id="D13365">
    <property type="status" value="NOT_ANNOTATED_CDS"/>
    <property type="molecule type" value="mRNA"/>
</dbReference>
<dbReference type="EMBL" id="S72043">
    <property type="protein sequence ID" value="AAB31396.1"/>
    <property type="molecule type" value="Genomic_DNA"/>
</dbReference>
<dbReference type="EMBL" id="X89604">
    <property type="protein sequence ID" value="CAA61763.1"/>
    <property type="molecule type" value="mRNA"/>
</dbReference>
<dbReference type="EMBL" id="BT007030">
    <property type="protein sequence ID" value="AAP35677.1"/>
    <property type="molecule type" value="mRNA"/>
</dbReference>
<dbReference type="EMBL" id="DQ297144">
    <property type="protein sequence ID" value="ABB84467.1"/>
    <property type="molecule type" value="Genomic_DNA"/>
</dbReference>
<dbReference type="EMBL" id="BC013081">
    <property type="protein sequence ID" value="AAH13081.1"/>
    <property type="molecule type" value="mRNA"/>
</dbReference>
<dbReference type="CCDS" id="CCDS10762.1"/>
<dbReference type="PIR" id="B46034">
    <property type="entry name" value="B46034"/>
</dbReference>
<dbReference type="RefSeq" id="NP_005945.1">
    <property type="nucleotide sequence ID" value="NM_005954.4"/>
</dbReference>
<dbReference type="PDB" id="2F5H">
    <property type="method" value="NMR"/>
    <property type="chains" value="A=32-68"/>
</dbReference>
<dbReference type="PDB" id="2FJ4">
    <property type="method" value="NMR"/>
    <property type="chains" value="A=32-68"/>
</dbReference>
<dbReference type="PDB" id="2FJ5">
    <property type="method" value="NMR"/>
    <property type="chains" value="A=32-68"/>
</dbReference>
<dbReference type="PDBsum" id="2F5H"/>
<dbReference type="PDBsum" id="2FJ4"/>
<dbReference type="PDBsum" id="2FJ5"/>
<dbReference type="SMR" id="P25713"/>
<dbReference type="BioGRID" id="110610">
    <property type="interactions" value="8"/>
</dbReference>
<dbReference type="FunCoup" id="P25713">
    <property type="interactions" value="1"/>
</dbReference>
<dbReference type="IntAct" id="P25713">
    <property type="interactions" value="2"/>
</dbReference>
<dbReference type="MINT" id="P25713"/>
<dbReference type="STRING" id="9606.ENSP00000200691"/>
<dbReference type="DrugBank" id="DB09130">
    <property type="generic name" value="Copper"/>
</dbReference>
<dbReference type="DrugBank" id="DB12965">
    <property type="generic name" value="Silver"/>
</dbReference>
<dbReference type="DrugBank" id="DB01593">
    <property type="generic name" value="Zinc"/>
</dbReference>
<dbReference type="DrugBank" id="DB14487">
    <property type="generic name" value="Zinc acetate"/>
</dbReference>
<dbReference type="DrugBank" id="DB14533">
    <property type="generic name" value="Zinc chloride"/>
</dbReference>
<dbReference type="DrugBank" id="DB14548">
    <property type="generic name" value="Zinc sulfate, unspecified form"/>
</dbReference>
<dbReference type="iPTMnet" id="P25713"/>
<dbReference type="PhosphoSitePlus" id="P25713"/>
<dbReference type="BioMuta" id="MT3"/>
<dbReference type="DMDM" id="127404"/>
<dbReference type="MassIVE" id="P25713"/>
<dbReference type="PaxDb" id="9606-ENSP00000200691"/>
<dbReference type="PeptideAtlas" id="P25713"/>
<dbReference type="ProteomicsDB" id="54284"/>
<dbReference type="Antibodypedia" id="1293">
    <property type="antibodies" value="157 antibodies from 19 providers"/>
</dbReference>
<dbReference type="DNASU" id="4504"/>
<dbReference type="Ensembl" id="ENST00000200691.5">
    <property type="protein sequence ID" value="ENSP00000200691.5"/>
    <property type="gene ID" value="ENSG00000087250.9"/>
</dbReference>
<dbReference type="GeneID" id="4504"/>
<dbReference type="KEGG" id="hsa:4504"/>
<dbReference type="MANE-Select" id="ENST00000200691.5">
    <property type="protein sequence ID" value="ENSP00000200691.5"/>
    <property type="RefSeq nucleotide sequence ID" value="NM_005954.4"/>
    <property type="RefSeq protein sequence ID" value="NP_005945.1"/>
</dbReference>
<dbReference type="UCSC" id="uc002ejf.4">
    <property type="organism name" value="human"/>
</dbReference>
<dbReference type="AGR" id="HGNC:7408"/>
<dbReference type="CTD" id="4504"/>
<dbReference type="DisGeNET" id="4504"/>
<dbReference type="GeneCards" id="MT3"/>
<dbReference type="HGNC" id="HGNC:7408">
    <property type="gene designation" value="MT3"/>
</dbReference>
<dbReference type="HPA" id="ENSG00000087250">
    <property type="expression patterns" value="Tissue enriched (brain)"/>
</dbReference>
<dbReference type="MIM" id="139255">
    <property type="type" value="gene"/>
</dbReference>
<dbReference type="neXtProt" id="NX_P25713"/>
<dbReference type="OpenTargets" id="ENSG00000087250"/>
<dbReference type="PharmGKB" id="PA31216"/>
<dbReference type="VEuPathDB" id="HostDB:ENSG00000087250"/>
<dbReference type="eggNOG" id="KOG4738">
    <property type="taxonomic scope" value="Eukaryota"/>
</dbReference>
<dbReference type="GeneTree" id="ENSGT00950000182967"/>
<dbReference type="HOGENOM" id="CLU_171204_2_0_1"/>
<dbReference type="InParanoid" id="P25713"/>
<dbReference type="OMA" id="CEDSCKC"/>
<dbReference type="OrthoDB" id="9539597at2759"/>
<dbReference type="PAN-GO" id="P25713">
    <property type="GO annotations" value="9 GO annotations based on evolutionary models"/>
</dbReference>
<dbReference type="PhylomeDB" id="P25713"/>
<dbReference type="PathwayCommons" id="P25713"/>
<dbReference type="Reactome" id="R-HSA-5661231">
    <property type="pathway name" value="Metallothioneins bind metals"/>
</dbReference>
<dbReference type="SignaLink" id="P25713"/>
<dbReference type="BioGRID-ORCS" id="4504">
    <property type="hits" value="12 hits in 1143 CRISPR screens"/>
</dbReference>
<dbReference type="ChiTaRS" id="MT3">
    <property type="organism name" value="human"/>
</dbReference>
<dbReference type="EvolutionaryTrace" id="P25713"/>
<dbReference type="GeneWiki" id="MT3"/>
<dbReference type="GenomeRNAi" id="4504"/>
<dbReference type="Pharos" id="P25713">
    <property type="development level" value="Tbio"/>
</dbReference>
<dbReference type="PRO" id="PR:P25713"/>
<dbReference type="Proteomes" id="UP000005640">
    <property type="component" value="Chromosome 16"/>
</dbReference>
<dbReference type="RNAct" id="P25713">
    <property type="molecule type" value="protein"/>
</dbReference>
<dbReference type="Bgee" id="ENSG00000087250">
    <property type="expression patterns" value="Expressed in nucleus accumbens and 109 other cell types or tissues"/>
</dbReference>
<dbReference type="ExpressionAtlas" id="P25713">
    <property type="expression patterns" value="baseline and differential"/>
</dbReference>
<dbReference type="GO" id="GO:0097450">
    <property type="term" value="C:astrocyte end-foot"/>
    <property type="evidence" value="ECO:0007669"/>
    <property type="project" value="Ensembl"/>
</dbReference>
<dbReference type="GO" id="GO:0030424">
    <property type="term" value="C:axon"/>
    <property type="evidence" value="ECO:0007669"/>
    <property type="project" value="Ensembl"/>
</dbReference>
<dbReference type="GO" id="GO:0005737">
    <property type="term" value="C:cytoplasm"/>
    <property type="evidence" value="ECO:0000314"/>
    <property type="project" value="UniProtKB"/>
</dbReference>
<dbReference type="GO" id="GO:0005829">
    <property type="term" value="C:cytosol"/>
    <property type="evidence" value="ECO:0000304"/>
    <property type="project" value="Reactome"/>
</dbReference>
<dbReference type="GO" id="GO:0043197">
    <property type="term" value="C:dendritic spine"/>
    <property type="evidence" value="ECO:0007669"/>
    <property type="project" value="Ensembl"/>
</dbReference>
<dbReference type="GO" id="GO:0005615">
    <property type="term" value="C:extracellular space"/>
    <property type="evidence" value="ECO:0007669"/>
    <property type="project" value="Ensembl"/>
</dbReference>
<dbReference type="GO" id="GO:0016234">
    <property type="term" value="C:inclusion body"/>
    <property type="evidence" value="ECO:0000314"/>
    <property type="project" value="UniProtKB"/>
</dbReference>
<dbReference type="GO" id="GO:0005874">
    <property type="term" value="C:microtubule"/>
    <property type="evidence" value="ECO:0007669"/>
    <property type="project" value="Ensembl"/>
</dbReference>
<dbReference type="GO" id="GO:0005741">
    <property type="term" value="C:mitochondrial outer membrane"/>
    <property type="evidence" value="ECO:0007669"/>
    <property type="project" value="Ensembl"/>
</dbReference>
<dbReference type="GO" id="GO:0005634">
    <property type="term" value="C:nucleus"/>
    <property type="evidence" value="ECO:0000318"/>
    <property type="project" value="GO_Central"/>
</dbReference>
<dbReference type="GO" id="GO:0048471">
    <property type="term" value="C:perinuclear region of cytoplasm"/>
    <property type="evidence" value="ECO:0000314"/>
    <property type="project" value="UniProtKB"/>
</dbReference>
<dbReference type="GO" id="GO:0005840">
    <property type="term" value="C:ribosome"/>
    <property type="evidence" value="ECO:0007669"/>
    <property type="project" value="Ensembl"/>
</dbReference>
<dbReference type="GO" id="GO:0008021">
    <property type="term" value="C:synaptic vesicle"/>
    <property type="evidence" value="ECO:0000250"/>
    <property type="project" value="UniProtKB"/>
</dbReference>
<dbReference type="GO" id="GO:0016209">
    <property type="term" value="F:antioxidant activity"/>
    <property type="evidence" value="ECO:0000303"/>
    <property type="project" value="UniProtKB"/>
</dbReference>
<dbReference type="GO" id="GO:0046870">
    <property type="term" value="F:cadmium ion binding"/>
    <property type="evidence" value="ECO:0000314"/>
    <property type="project" value="UniProtKB"/>
</dbReference>
<dbReference type="GO" id="GO:0005507">
    <property type="term" value="F:copper ion binding"/>
    <property type="evidence" value="ECO:0000314"/>
    <property type="project" value="UniProtKB"/>
</dbReference>
<dbReference type="GO" id="GO:0046872">
    <property type="term" value="F:metal ion binding"/>
    <property type="evidence" value="ECO:0000318"/>
    <property type="project" value="GO_Central"/>
</dbReference>
<dbReference type="GO" id="GO:0140487">
    <property type="term" value="F:metal ion sequestering activity"/>
    <property type="evidence" value="ECO:0007669"/>
    <property type="project" value="Ensembl"/>
</dbReference>
<dbReference type="GO" id="GO:0030295">
    <property type="term" value="F:protein kinase activator activity"/>
    <property type="evidence" value="ECO:0000314"/>
    <property type="project" value="UniProtKB"/>
</dbReference>
<dbReference type="GO" id="GO:0008270">
    <property type="term" value="F:zinc ion binding"/>
    <property type="evidence" value="ECO:0000314"/>
    <property type="project" value="UniProtKB"/>
</dbReference>
<dbReference type="GO" id="GO:0032148">
    <property type="term" value="P:activation of protein kinase B activity"/>
    <property type="evidence" value="ECO:0000314"/>
    <property type="project" value="UniProtKB"/>
</dbReference>
<dbReference type="GO" id="GO:1990748">
    <property type="term" value="P:cellular detoxification"/>
    <property type="evidence" value="ECO:0000314"/>
    <property type="project" value="UniProtKB"/>
</dbReference>
<dbReference type="GO" id="GO:0071276">
    <property type="term" value="P:cellular response to cadmium ion"/>
    <property type="evidence" value="ECO:0000318"/>
    <property type="project" value="GO_Central"/>
</dbReference>
<dbReference type="GO" id="GO:0071280">
    <property type="term" value="P:cellular response to copper ion"/>
    <property type="evidence" value="ECO:0000318"/>
    <property type="project" value="GO_Central"/>
</dbReference>
<dbReference type="GO" id="GO:0071456">
    <property type="term" value="P:cellular response to hypoxia"/>
    <property type="evidence" value="ECO:0000270"/>
    <property type="project" value="UniProtKB"/>
</dbReference>
<dbReference type="GO" id="GO:0034599">
    <property type="term" value="P:cellular response to oxidative stress"/>
    <property type="evidence" value="ECO:0000270"/>
    <property type="project" value="UniProtKB"/>
</dbReference>
<dbReference type="GO" id="GO:0034614">
    <property type="term" value="P:cellular response to reactive oxygen species"/>
    <property type="evidence" value="ECO:0000314"/>
    <property type="project" value="GO_Central"/>
</dbReference>
<dbReference type="GO" id="GO:0071294">
    <property type="term" value="P:cellular response to zinc ion"/>
    <property type="evidence" value="ECO:0000318"/>
    <property type="project" value="GO_Central"/>
</dbReference>
<dbReference type="GO" id="GO:0071585">
    <property type="term" value="P:detoxification of cadmium ion"/>
    <property type="evidence" value="ECO:0007669"/>
    <property type="project" value="Ensembl"/>
</dbReference>
<dbReference type="GO" id="GO:0010273">
    <property type="term" value="P:detoxification of copper ion"/>
    <property type="evidence" value="ECO:0000318"/>
    <property type="project" value="GO_Central"/>
</dbReference>
<dbReference type="GO" id="GO:0006112">
    <property type="term" value="P:energy reserve metabolic process"/>
    <property type="evidence" value="ECO:0000250"/>
    <property type="project" value="UniProtKB"/>
</dbReference>
<dbReference type="GO" id="GO:0030003">
    <property type="term" value="P:intracellular monoatomic cation homeostasis"/>
    <property type="evidence" value="ECO:0000304"/>
    <property type="project" value="UniProtKB"/>
</dbReference>
<dbReference type="GO" id="GO:0006882">
    <property type="term" value="P:intracellular zinc ion homeostasis"/>
    <property type="evidence" value="ECO:0000250"/>
    <property type="project" value="UniProtKB"/>
</dbReference>
<dbReference type="GO" id="GO:0033210">
    <property type="term" value="P:leptin-mediated signaling pathway"/>
    <property type="evidence" value="ECO:0000250"/>
    <property type="project" value="UniProtKB"/>
</dbReference>
<dbReference type="GO" id="GO:0030517">
    <property type="term" value="P:negative regulation of axon extension"/>
    <property type="evidence" value="ECO:0000314"/>
    <property type="project" value="UniProtKB"/>
</dbReference>
<dbReference type="GO" id="GO:0030308">
    <property type="term" value="P:negative regulation of cell growth"/>
    <property type="evidence" value="ECO:0000314"/>
    <property type="project" value="UniProtKB"/>
</dbReference>
<dbReference type="GO" id="GO:2000296">
    <property type="term" value="P:negative regulation of hydrogen peroxide catabolic process"/>
    <property type="evidence" value="ECO:0007669"/>
    <property type="project" value="Ensembl"/>
</dbReference>
<dbReference type="GO" id="GO:0043524">
    <property type="term" value="P:negative regulation of neuron apoptotic process"/>
    <property type="evidence" value="ECO:0000250"/>
    <property type="project" value="UniProtKB"/>
</dbReference>
<dbReference type="GO" id="GO:0010977">
    <property type="term" value="P:negative regulation of neuron projection development"/>
    <property type="evidence" value="ECO:0000304"/>
    <property type="project" value="GO_Central"/>
</dbReference>
<dbReference type="GO" id="GO:0051354">
    <property type="term" value="P:negative regulation of oxidoreductase activity"/>
    <property type="evidence" value="ECO:0000314"/>
    <property type="project" value="UniProtKB"/>
</dbReference>
<dbReference type="GO" id="GO:0045893">
    <property type="term" value="P:positive regulation of DNA-templated transcription"/>
    <property type="evidence" value="ECO:0000314"/>
    <property type="project" value="UniProtKB"/>
</dbReference>
<dbReference type="GO" id="GO:0070374">
    <property type="term" value="P:positive regulation of ERK1 and ERK2 cascade"/>
    <property type="evidence" value="ECO:0000314"/>
    <property type="project" value="UniProtKB"/>
</dbReference>
<dbReference type="GO" id="GO:0010628">
    <property type="term" value="P:positive regulation of gene expression"/>
    <property type="evidence" value="ECO:0000314"/>
    <property type="project" value="UniProtKB"/>
</dbReference>
<dbReference type="GO" id="GO:2000376">
    <property type="term" value="P:positive regulation of oxygen metabolic process"/>
    <property type="evidence" value="ECO:0000250"/>
    <property type="project" value="UniProtKB"/>
</dbReference>
<dbReference type="GO" id="GO:0001934">
    <property type="term" value="P:positive regulation of protein phosphorylation"/>
    <property type="evidence" value="ECO:0000314"/>
    <property type="project" value="UniProtKB"/>
</dbReference>
<dbReference type="GO" id="GO:0030949">
    <property type="term" value="P:positive regulation of vascular endothelial growth factor receptor signaling pathway"/>
    <property type="evidence" value="ECO:0000314"/>
    <property type="project" value="UniProtKB"/>
</dbReference>
<dbReference type="GO" id="GO:0050821">
    <property type="term" value="P:protein stabilization"/>
    <property type="evidence" value="ECO:0000314"/>
    <property type="project" value="UniProtKB"/>
</dbReference>
<dbReference type="GO" id="GO:0032095">
    <property type="term" value="P:regulation of response to food"/>
    <property type="evidence" value="ECO:0000250"/>
    <property type="project" value="UniProtKB"/>
</dbReference>
<dbReference type="GO" id="GO:0019430">
    <property type="term" value="P:removal of superoxide radicals"/>
    <property type="evidence" value="ECO:0000314"/>
    <property type="project" value="UniProtKB"/>
</dbReference>
<dbReference type="GO" id="GO:0001666">
    <property type="term" value="P:response to hypoxia"/>
    <property type="evidence" value="ECO:0000314"/>
    <property type="project" value="UniProtKB"/>
</dbReference>
<dbReference type="GO" id="GO:0006829">
    <property type="term" value="P:zinc ion transport"/>
    <property type="evidence" value="ECO:0000250"/>
    <property type="project" value="UniProtKB"/>
</dbReference>
<dbReference type="FunFam" id="4.10.10.10:FF:000001">
    <property type="entry name" value="Metallothionein"/>
    <property type="match status" value="1"/>
</dbReference>
<dbReference type="Gene3D" id="4.10.10.10">
    <property type="entry name" value="Metallothionein Isoform II"/>
    <property type="match status" value="1"/>
</dbReference>
<dbReference type="InterPro" id="IPR017854">
    <property type="entry name" value="Metalthion_dom_sf"/>
</dbReference>
<dbReference type="InterPro" id="IPR023587">
    <property type="entry name" value="Metalthion_dom_sf_vert"/>
</dbReference>
<dbReference type="InterPro" id="IPR000006">
    <property type="entry name" value="Metalthion_vert"/>
</dbReference>
<dbReference type="InterPro" id="IPR018064">
    <property type="entry name" value="Metalthion_vert_metal_BS"/>
</dbReference>
<dbReference type="PANTHER" id="PTHR23299">
    <property type="entry name" value="METALLOTHIONEIN"/>
    <property type="match status" value="1"/>
</dbReference>
<dbReference type="PANTHER" id="PTHR23299:SF18">
    <property type="entry name" value="METALLOTHIONEIN-3"/>
    <property type="match status" value="1"/>
</dbReference>
<dbReference type="Pfam" id="PF00131">
    <property type="entry name" value="Metallothio"/>
    <property type="match status" value="1"/>
</dbReference>
<dbReference type="PRINTS" id="PR00860">
    <property type="entry name" value="MTVERTEBRATE"/>
</dbReference>
<dbReference type="SUPFAM" id="SSF57868">
    <property type="entry name" value="Metallothionein"/>
    <property type="match status" value="1"/>
</dbReference>
<dbReference type="PROSITE" id="PS00203">
    <property type="entry name" value="METALLOTHIONEIN_VRT"/>
    <property type="match status" value="1"/>
</dbReference>
<accession>P25713</accession>
<accession>Q2V574</accession>